<protein>
    <recommendedName>
        <fullName>Putative ESX-1 scaffolding and assembly protein SaeB</fullName>
    </recommendedName>
</protein>
<accession>A0QNH5</accession>
<accession>I7G2D7</accession>
<proteinExistence type="predicted"/>
<reference key="1">
    <citation type="submission" date="2006-10" db="EMBL/GenBank/DDBJ databases">
        <authorList>
            <person name="Fleischmann R.D."/>
            <person name="Dodson R.J."/>
            <person name="Haft D.H."/>
            <person name="Merkel J.S."/>
            <person name="Nelson W.C."/>
            <person name="Fraser C.M."/>
        </authorList>
    </citation>
    <scope>NUCLEOTIDE SEQUENCE [LARGE SCALE GENOMIC DNA]</scope>
    <source>
        <strain>ATCC 700084 / mc(2)155</strain>
    </source>
</reference>
<reference key="2">
    <citation type="journal article" date="2007" name="Genome Biol.">
        <title>Interrupted coding sequences in Mycobacterium smegmatis: authentic mutations or sequencing errors?</title>
        <authorList>
            <person name="Deshayes C."/>
            <person name="Perrodou E."/>
            <person name="Gallien S."/>
            <person name="Euphrasie D."/>
            <person name="Schaeffer C."/>
            <person name="Van-Dorsselaer A."/>
            <person name="Poch O."/>
            <person name="Lecompte O."/>
            <person name="Reyrat J.-M."/>
        </authorList>
    </citation>
    <scope>NUCLEOTIDE SEQUENCE [LARGE SCALE GENOMIC DNA]</scope>
    <source>
        <strain>ATCC 700084 / mc(2)155</strain>
    </source>
</reference>
<reference key="3">
    <citation type="journal article" date="2009" name="Genome Res.">
        <title>Ortho-proteogenomics: multiple proteomes investigation through orthology and a new MS-based protocol.</title>
        <authorList>
            <person name="Gallien S."/>
            <person name="Perrodou E."/>
            <person name="Carapito C."/>
            <person name="Deshayes C."/>
            <person name="Reyrat J.-M."/>
            <person name="Van Dorsselaer A."/>
            <person name="Poch O."/>
            <person name="Schaeffer C."/>
            <person name="Lecompte O."/>
        </authorList>
    </citation>
    <scope>NUCLEOTIDE SEQUENCE [LARGE SCALE GENOMIC DNA]</scope>
    <source>
        <strain>ATCC 700084 / mc(2)155</strain>
    </source>
</reference>
<reference key="4">
    <citation type="journal article" date="2008" name="Mol. Microbiol.">
        <title>The specialized secretory apparatus ESX-1 is essential for DNA transfer in Mycobacterium smegmatis.</title>
        <authorList>
            <person name="Coros A."/>
            <person name="Callahan B."/>
            <person name="Battaglioli E."/>
            <person name="Derbyshire K.M."/>
        </authorList>
    </citation>
    <scope>FUNCTION</scope>
    <scope>DISRUPTION PHENOTYPE</scope>
    <source>
        <strain>ATCC 700084 / mc(2)155</strain>
        <strain>MKD8</strain>
    </source>
</reference>
<reference key="5">
    <citation type="journal article" date="2012" name="Mol. Microbiol.">
        <title>Polar assembly and scaffolding proteins of the virulence-associated ESX-1 secretory apparatus in mycobacteria.</title>
        <authorList>
            <person name="Wirth S.E."/>
            <person name="Krywy J.A."/>
            <person name="Aldridge B.B."/>
            <person name="Fortune S.M."/>
            <person name="Fernandez-Suarez M."/>
            <person name="Gray T.A."/>
            <person name="Derbyshire K.M."/>
        </authorList>
    </citation>
    <scope>PUTATIVE FUNCTION</scope>
    <scope>DISRUPTION PHENOTYPE</scope>
    <source>
        <strain>ATCC 700084 / mc(2)155</strain>
    </source>
</reference>
<keyword id="KW-1185">Reference proteome</keyword>
<gene>
    <name evidence="3" type="primary">saeB</name>
    <name type="ordered locus">MSMEG_0045</name>
    <name type="ordered locus">MSMEI_0047</name>
</gene>
<organism>
    <name type="scientific">Mycolicibacterium smegmatis (strain ATCC 700084 / mc(2)155)</name>
    <name type="common">Mycobacterium smegmatis</name>
    <dbReference type="NCBI Taxonomy" id="246196"/>
    <lineage>
        <taxon>Bacteria</taxon>
        <taxon>Bacillati</taxon>
        <taxon>Actinomycetota</taxon>
        <taxon>Actinomycetes</taxon>
        <taxon>Mycobacteriales</taxon>
        <taxon>Mycobacteriaceae</taxon>
        <taxon>Mycolicibacterium</taxon>
    </lineage>
</organism>
<name>SAEB_MYCS2</name>
<comment type="function">
    <text evidence="1 6">May be involved in assembly of the ESX-1 / type VII specialized secretion system (T7SS), which exports several proteins including EsxA and EsxB (PubMed:22233444). Involved in DNA conjugation in recipient (MDK8) but not donor (mc(2)155) strain (PubMed:18554329).</text>
</comment>
<comment type="disruption phenotype">
    <text evidence="1 2">Loss of DNA conjugation when disrupted in recipient strain, no effect when disrupted in donor strain (PubMed:18554329). The recipient strain secretes reduced amounts of EsxB (PubMed:18554329). Disruption of the probable saeA-saeB-saeC operon completely blocks polar localization of EccCb1 (PubMed:22233444).</text>
</comment>
<comment type="miscellaneous">
    <text evidence="5">DNA conjugation in M.smegmatis is unidirectional with distinct donor and recipient strains; mc(2)155 is a donor strain while MKD8 is a recipient strain. Mutations in a donor strain that alter DNA transfer do not always alter DNA transfer in a recipient strain.</text>
</comment>
<comment type="sequence caution" evidence="4">
    <conflict type="erroneous initiation">
        <sequence resource="EMBL-CDS" id="AFP36529"/>
    </conflict>
    <text>Extended N-terminus.</text>
</comment>
<dbReference type="EMBL" id="CP000480">
    <property type="protein sequence ID" value="ABK71610.1"/>
    <property type="molecule type" value="Genomic_DNA"/>
</dbReference>
<dbReference type="EMBL" id="CP001663">
    <property type="protein sequence ID" value="AFP36529.1"/>
    <property type="status" value="ALT_INIT"/>
    <property type="molecule type" value="Genomic_DNA"/>
</dbReference>
<dbReference type="RefSeq" id="WP_011726629.1">
    <property type="nucleotide sequence ID" value="NZ_SIJM01000001.1"/>
</dbReference>
<dbReference type="RefSeq" id="YP_884463.1">
    <property type="nucleotide sequence ID" value="NC_008596.1"/>
</dbReference>
<dbReference type="STRING" id="246196.MSMEG_0045"/>
<dbReference type="PaxDb" id="246196-MSMEI_0047"/>
<dbReference type="KEGG" id="msb:LJ00_00225"/>
<dbReference type="KEGG" id="msg:MSMEI_0047"/>
<dbReference type="KEGG" id="msm:MSMEG_0045"/>
<dbReference type="PATRIC" id="fig|246196.19.peg.43"/>
<dbReference type="eggNOG" id="ENOG502ZI73">
    <property type="taxonomic scope" value="Bacteria"/>
</dbReference>
<dbReference type="OrthoDB" id="3250392at2"/>
<dbReference type="Proteomes" id="UP000000757">
    <property type="component" value="Chromosome"/>
</dbReference>
<dbReference type="Proteomes" id="UP000006158">
    <property type="component" value="Chromosome"/>
</dbReference>
<dbReference type="InterPro" id="IPR045401">
    <property type="entry name" value="GAP1-M"/>
</dbReference>
<dbReference type="InterPro" id="IPR045402">
    <property type="entry name" value="GAP1-N2"/>
</dbReference>
<dbReference type="Pfam" id="PF20014">
    <property type="entry name" value="GAP1-M"/>
    <property type="match status" value="1"/>
</dbReference>
<dbReference type="Pfam" id="PF20013">
    <property type="entry name" value="GAP1-N2"/>
    <property type="match status" value="1"/>
</dbReference>
<feature type="chain" id="PRO_0000438353" description="Putative ESX-1 scaffolding and assembly protein SaeB">
    <location>
        <begin position="1"/>
        <end position="822"/>
    </location>
</feature>
<sequence length="822" mass="86601">MTSRFGQLTYTSFDAVGTVGGWQVKETSDALTPEETQLMLAGVRTVFRTVEPMPDYPTPEQLEAAPRRLAYSRVGETYAALWHTVPAGADSTGRPGNVFAHVLLDRTPDVAPRHRAIQWWRSPHWLCPYGATAVSRAALAEPGAEPGRVVTKDSVVAFALDTTTWRLATLFGLLDAVAAALDGGPPVVLGVESPDNAAQWIGLLSFLMSPGTAAQLSFSTFDRADQLNPHSGQMLSAVPLEDLSAVPAGMVAISEAETLSLGELGGEPHRTAGGYAIDVTPWSAMAQVVVLDPGSARRLLDDIDAVAEQVRDSGLHPAWPMAMAVAGRAEFADAEEEAHEVIAAHSPPGVAVGSAAARTISGVLSAAVGTTTADAWRAVQELPTGPGAVFADTTYLCRAVTDDEWLSENSPIPLGPRMFHGKPIPPPLRTAIGRALDPGRGPQRLLQVADLLVRAGVEDPRIRTTLVEDVVPRLGDAEVRERVGADARLTLGAVLLNDGDANGTAIDDGLLDWLADTAPLPPPDELAQATPWDRTWTIAALRGVRARRRGTGGAGQDAGALLWWLRATGSADFEQTATASAWNPEDLLLAIGADPLPGAAAVRTLVAAADSPALNRLAAKVIDENGDTLAVACAAVRTIEPTVWLQQRYVETHQHAYVPLWDEVLSVVDPADVHPDFSTRLLAFALLGLFTGHPYPRACSGFAASDRLGGEAIERLMPLVGEGQLAPHAVVAIGLLRAAAPPDPAHPDVTLDELAGHLAEQVATGMAGDDNDVDGVVAVMAQLSGDSAEPALRGYRKMVTKLLARRGDSPSLTARLRGGRQA</sequence>
<evidence type="ECO:0000269" key="1">
    <source>
    </source>
</evidence>
<evidence type="ECO:0000269" key="2">
    <source>
    </source>
</evidence>
<evidence type="ECO:0000303" key="3">
    <source>
    </source>
</evidence>
<evidence type="ECO:0000305" key="4"/>
<evidence type="ECO:0000305" key="5">
    <source>
    </source>
</evidence>
<evidence type="ECO:0000305" key="6">
    <source>
    </source>
</evidence>